<name>RLMH_CITBB</name>
<gene>
    <name evidence="1" type="primary">rlmH</name>
    <name type="ordered locus">Gbem_3775</name>
</gene>
<dbReference type="EC" id="2.1.1.177" evidence="1"/>
<dbReference type="EMBL" id="CP001124">
    <property type="protein sequence ID" value="ACH40767.1"/>
    <property type="molecule type" value="Genomic_DNA"/>
</dbReference>
<dbReference type="RefSeq" id="WP_012532203.1">
    <property type="nucleotide sequence ID" value="NC_011146.1"/>
</dbReference>
<dbReference type="SMR" id="B5EEI1"/>
<dbReference type="STRING" id="404380.Gbem_3775"/>
<dbReference type="KEGG" id="gbm:Gbem_3775"/>
<dbReference type="eggNOG" id="COG1576">
    <property type="taxonomic scope" value="Bacteria"/>
</dbReference>
<dbReference type="HOGENOM" id="CLU_100552_2_0_7"/>
<dbReference type="OrthoDB" id="9806643at2"/>
<dbReference type="Proteomes" id="UP000008825">
    <property type="component" value="Chromosome"/>
</dbReference>
<dbReference type="GO" id="GO:0005737">
    <property type="term" value="C:cytoplasm"/>
    <property type="evidence" value="ECO:0007669"/>
    <property type="project" value="UniProtKB-SubCell"/>
</dbReference>
<dbReference type="GO" id="GO:0070038">
    <property type="term" value="F:rRNA (pseudouridine-N3-)-methyltransferase activity"/>
    <property type="evidence" value="ECO:0007669"/>
    <property type="project" value="UniProtKB-UniRule"/>
</dbReference>
<dbReference type="CDD" id="cd18081">
    <property type="entry name" value="RlmH-like"/>
    <property type="match status" value="1"/>
</dbReference>
<dbReference type="Gene3D" id="3.40.1280.10">
    <property type="match status" value="1"/>
</dbReference>
<dbReference type="HAMAP" id="MF_00658">
    <property type="entry name" value="23SrRNA_methyltr_H"/>
    <property type="match status" value="1"/>
</dbReference>
<dbReference type="InterPro" id="IPR029028">
    <property type="entry name" value="Alpha/beta_knot_MTases"/>
</dbReference>
<dbReference type="InterPro" id="IPR003742">
    <property type="entry name" value="RlmH-like"/>
</dbReference>
<dbReference type="InterPro" id="IPR029026">
    <property type="entry name" value="tRNA_m1G_MTases_N"/>
</dbReference>
<dbReference type="PANTHER" id="PTHR33603">
    <property type="entry name" value="METHYLTRANSFERASE"/>
    <property type="match status" value="1"/>
</dbReference>
<dbReference type="PANTHER" id="PTHR33603:SF1">
    <property type="entry name" value="RIBOSOMAL RNA LARGE SUBUNIT METHYLTRANSFERASE H"/>
    <property type="match status" value="1"/>
</dbReference>
<dbReference type="Pfam" id="PF02590">
    <property type="entry name" value="SPOUT_MTase"/>
    <property type="match status" value="1"/>
</dbReference>
<dbReference type="PIRSF" id="PIRSF004505">
    <property type="entry name" value="MT_bac"/>
    <property type="match status" value="1"/>
</dbReference>
<dbReference type="SUPFAM" id="SSF75217">
    <property type="entry name" value="alpha/beta knot"/>
    <property type="match status" value="1"/>
</dbReference>
<protein>
    <recommendedName>
        <fullName evidence="1">Ribosomal RNA large subunit methyltransferase H</fullName>
        <ecNumber evidence="1">2.1.1.177</ecNumber>
    </recommendedName>
    <alternativeName>
        <fullName evidence="1">23S rRNA (pseudouridine1915-N3)-methyltransferase</fullName>
    </alternativeName>
    <alternativeName>
        <fullName evidence="1">23S rRNA m3Psi1915 methyltransferase</fullName>
    </alternativeName>
    <alternativeName>
        <fullName evidence="1">rRNA (pseudouridine-N3-)-methyltransferase RlmH</fullName>
    </alternativeName>
</protein>
<comment type="function">
    <text evidence="1">Specifically methylates the pseudouridine at position 1915 (m3Psi1915) in 23S rRNA.</text>
</comment>
<comment type="catalytic activity">
    <reaction evidence="1">
        <text>pseudouridine(1915) in 23S rRNA + S-adenosyl-L-methionine = N(3)-methylpseudouridine(1915) in 23S rRNA + S-adenosyl-L-homocysteine + H(+)</text>
        <dbReference type="Rhea" id="RHEA:42752"/>
        <dbReference type="Rhea" id="RHEA-COMP:10221"/>
        <dbReference type="Rhea" id="RHEA-COMP:10222"/>
        <dbReference type="ChEBI" id="CHEBI:15378"/>
        <dbReference type="ChEBI" id="CHEBI:57856"/>
        <dbReference type="ChEBI" id="CHEBI:59789"/>
        <dbReference type="ChEBI" id="CHEBI:65314"/>
        <dbReference type="ChEBI" id="CHEBI:74486"/>
        <dbReference type="EC" id="2.1.1.177"/>
    </reaction>
</comment>
<comment type="subunit">
    <text evidence="1">Homodimer.</text>
</comment>
<comment type="subcellular location">
    <subcellularLocation>
        <location evidence="1">Cytoplasm</location>
    </subcellularLocation>
</comment>
<comment type="similarity">
    <text evidence="1">Belongs to the RNA methyltransferase RlmH family.</text>
</comment>
<feature type="chain" id="PRO_0000366600" description="Ribosomal RNA large subunit methyltransferase H">
    <location>
        <begin position="1"/>
        <end position="154"/>
    </location>
</feature>
<feature type="binding site" evidence="1">
    <location>
        <position position="70"/>
    </location>
    <ligand>
        <name>S-adenosyl-L-methionine</name>
        <dbReference type="ChEBI" id="CHEBI:59789"/>
    </ligand>
</feature>
<feature type="binding site" evidence="1">
    <location>
        <position position="102"/>
    </location>
    <ligand>
        <name>S-adenosyl-L-methionine</name>
        <dbReference type="ChEBI" id="CHEBI:59789"/>
    </ligand>
</feature>
<feature type="binding site" evidence="1">
    <location>
        <begin position="121"/>
        <end position="126"/>
    </location>
    <ligand>
        <name>S-adenosyl-L-methionine</name>
        <dbReference type="ChEBI" id="CHEBI:59789"/>
    </ligand>
</feature>
<organism>
    <name type="scientific">Citrifermentans bemidjiense (strain ATCC BAA-1014 / DSM 16622 / JCM 12645 / Bem)</name>
    <name type="common">Geobacter bemidjiensis</name>
    <dbReference type="NCBI Taxonomy" id="404380"/>
    <lineage>
        <taxon>Bacteria</taxon>
        <taxon>Pseudomonadati</taxon>
        <taxon>Thermodesulfobacteriota</taxon>
        <taxon>Desulfuromonadia</taxon>
        <taxon>Geobacterales</taxon>
        <taxon>Geobacteraceae</taxon>
        <taxon>Citrifermentans</taxon>
    </lineage>
</organism>
<sequence length="154" mass="17767">MRLKLLWVGKTQESWVRTGIEEYAGRIRRYLPLEILEAREEKGAQAAAMRERECERLAKLIPKGGRLVLLDERGEAMTSPELASFLSKNRDQGTQDLVFAIGGAYGFTDQFRSQAFKSISLSRMTLTHQMVRVFLLEQIYRGFTIINCEPYHHE</sequence>
<proteinExistence type="inferred from homology"/>
<keyword id="KW-0963">Cytoplasm</keyword>
<keyword id="KW-0489">Methyltransferase</keyword>
<keyword id="KW-1185">Reference proteome</keyword>
<keyword id="KW-0698">rRNA processing</keyword>
<keyword id="KW-0949">S-adenosyl-L-methionine</keyword>
<keyword id="KW-0808">Transferase</keyword>
<accession>B5EEI1</accession>
<reference key="1">
    <citation type="submission" date="2008-07" db="EMBL/GenBank/DDBJ databases">
        <title>Complete sequence of Geobacter bemidjiensis BEM.</title>
        <authorList>
            <consortium name="US DOE Joint Genome Institute"/>
            <person name="Lucas S."/>
            <person name="Copeland A."/>
            <person name="Lapidus A."/>
            <person name="Glavina del Rio T."/>
            <person name="Dalin E."/>
            <person name="Tice H."/>
            <person name="Bruce D."/>
            <person name="Goodwin L."/>
            <person name="Pitluck S."/>
            <person name="Kiss H."/>
            <person name="Brettin T."/>
            <person name="Detter J.C."/>
            <person name="Han C."/>
            <person name="Kuske C.R."/>
            <person name="Schmutz J."/>
            <person name="Larimer F."/>
            <person name="Land M."/>
            <person name="Hauser L."/>
            <person name="Kyrpides N."/>
            <person name="Lykidis A."/>
            <person name="Lovley D."/>
            <person name="Richardson P."/>
        </authorList>
    </citation>
    <scope>NUCLEOTIDE SEQUENCE [LARGE SCALE GENOMIC DNA]</scope>
    <source>
        <strain>ATCC BAA-1014 / DSM 16622 / JCM 12645 / Bem</strain>
    </source>
</reference>
<evidence type="ECO:0000255" key="1">
    <source>
        <dbReference type="HAMAP-Rule" id="MF_00658"/>
    </source>
</evidence>